<accession>Q99YX2</accession>
<accession>Q48XS3</accession>
<feature type="chain" id="PRO_0000268514" description="Bifunctional protein FolD">
    <location>
        <begin position="1"/>
        <end position="284"/>
    </location>
</feature>
<feature type="binding site" evidence="1">
    <location>
        <begin position="165"/>
        <end position="167"/>
    </location>
    <ligand>
        <name>NADP(+)</name>
        <dbReference type="ChEBI" id="CHEBI:58349"/>
    </ligand>
</feature>
<feature type="binding site" evidence="1">
    <location>
        <position position="190"/>
    </location>
    <ligand>
        <name>NADP(+)</name>
        <dbReference type="ChEBI" id="CHEBI:58349"/>
    </ligand>
</feature>
<organism>
    <name type="scientific">Streptococcus pyogenes serotype M1</name>
    <dbReference type="NCBI Taxonomy" id="301447"/>
    <lineage>
        <taxon>Bacteria</taxon>
        <taxon>Bacillati</taxon>
        <taxon>Bacillota</taxon>
        <taxon>Bacilli</taxon>
        <taxon>Lactobacillales</taxon>
        <taxon>Streptococcaceae</taxon>
        <taxon>Streptococcus</taxon>
    </lineage>
</organism>
<keyword id="KW-0028">Amino-acid biosynthesis</keyword>
<keyword id="KW-0368">Histidine biosynthesis</keyword>
<keyword id="KW-0378">Hydrolase</keyword>
<keyword id="KW-0486">Methionine biosynthesis</keyword>
<keyword id="KW-0511">Multifunctional enzyme</keyword>
<keyword id="KW-0521">NADP</keyword>
<keyword id="KW-0554">One-carbon metabolism</keyword>
<keyword id="KW-0560">Oxidoreductase</keyword>
<keyword id="KW-0658">Purine biosynthesis</keyword>
<keyword id="KW-1185">Reference proteome</keyword>
<comment type="function">
    <text evidence="1">Catalyzes the oxidation of 5,10-methylenetetrahydrofolate to 5,10-methenyltetrahydrofolate and then the hydrolysis of 5,10-methenyltetrahydrofolate to 10-formyltetrahydrofolate.</text>
</comment>
<comment type="catalytic activity">
    <reaction evidence="1">
        <text>(6R)-5,10-methylene-5,6,7,8-tetrahydrofolate + NADP(+) = (6R)-5,10-methenyltetrahydrofolate + NADPH</text>
        <dbReference type="Rhea" id="RHEA:22812"/>
        <dbReference type="ChEBI" id="CHEBI:15636"/>
        <dbReference type="ChEBI" id="CHEBI:57455"/>
        <dbReference type="ChEBI" id="CHEBI:57783"/>
        <dbReference type="ChEBI" id="CHEBI:58349"/>
        <dbReference type="EC" id="1.5.1.5"/>
    </reaction>
</comment>
<comment type="catalytic activity">
    <reaction evidence="1">
        <text>(6R)-5,10-methenyltetrahydrofolate + H2O = (6R)-10-formyltetrahydrofolate + H(+)</text>
        <dbReference type="Rhea" id="RHEA:23700"/>
        <dbReference type="ChEBI" id="CHEBI:15377"/>
        <dbReference type="ChEBI" id="CHEBI:15378"/>
        <dbReference type="ChEBI" id="CHEBI:57455"/>
        <dbReference type="ChEBI" id="CHEBI:195366"/>
        <dbReference type="EC" id="3.5.4.9"/>
    </reaction>
</comment>
<comment type="pathway">
    <text evidence="1">One-carbon metabolism; tetrahydrofolate interconversion.</text>
</comment>
<comment type="subunit">
    <text evidence="1">Homodimer.</text>
</comment>
<comment type="similarity">
    <text evidence="1">Belongs to the tetrahydrofolate dehydrogenase/cyclohydrolase family.</text>
</comment>
<protein>
    <recommendedName>
        <fullName evidence="1">Bifunctional protein FolD</fullName>
    </recommendedName>
    <domain>
        <recommendedName>
            <fullName evidence="1">Methylenetetrahydrofolate dehydrogenase</fullName>
            <ecNumber evidence="1">1.5.1.5</ecNumber>
        </recommendedName>
    </domain>
    <domain>
        <recommendedName>
            <fullName evidence="1">Methenyltetrahydrofolate cyclohydrolase</fullName>
            <ecNumber evidence="1">3.5.4.9</ecNumber>
        </recommendedName>
    </domain>
</protein>
<gene>
    <name evidence="1" type="primary">folD</name>
    <name type="ordered locus">SPy_1502</name>
    <name type="ordered locus">M5005_Spy1234</name>
</gene>
<reference key="1">
    <citation type="journal article" date="2001" name="Proc. Natl. Acad. Sci. U.S.A.">
        <title>Complete genome sequence of an M1 strain of Streptococcus pyogenes.</title>
        <authorList>
            <person name="Ferretti J.J."/>
            <person name="McShan W.M."/>
            <person name="Ajdic D.J."/>
            <person name="Savic D.J."/>
            <person name="Savic G."/>
            <person name="Lyon K."/>
            <person name="Primeaux C."/>
            <person name="Sezate S."/>
            <person name="Suvorov A.N."/>
            <person name="Kenton S."/>
            <person name="Lai H.S."/>
            <person name="Lin S.P."/>
            <person name="Qian Y."/>
            <person name="Jia H.G."/>
            <person name="Najar F.Z."/>
            <person name="Ren Q."/>
            <person name="Zhu H."/>
            <person name="Song L."/>
            <person name="White J."/>
            <person name="Yuan X."/>
            <person name="Clifton S.W."/>
            <person name="Roe B.A."/>
            <person name="McLaughlin R.E."/>
        </authorList>
    </citation>
    <scope>NUCLEOTIDE SEQUENCE [LARGE SCALE GENOMIC DNA]</scope>
    <source>
        <strain>ATCC 700294 / SF370 / Serotype M1</strain>
    </source>
</reference>
<reference key="2">
    <citation type="journal article" date="2005" name="J. Infect. Dis.">
        <title>Evolutionary origin and emergence of a highly successful clone of serotype M1 group A Streptococcus involved multiple horizontal gene transfer events.</title>
        <authorList>
            <person name="Sumby P."/>
            <person name="Porcella S.F."/>
            <person name="Madrigal A.G."/>
            <person name="Barbian K.D."/>
            <person name="Virtaneva K."/>
            <person name="Ricklefs S.M."/>
            <person name="Sturdevant D.E."/>
            <person name="Graham M.R."/>
            <person name="Vuopio-Varkila J."/>
            <person name="Hoe N.P."/>
            <person name="Musser J.M."/>
        </authorList>
    </citation>
    <scope>NUCLEOTIDE SEQUENCE [LARGE SCALE GENOMIC DNA]</scope>
    <source>
        <strain>ATCC BAA-947 / MGAS5005 / Serotype M1</strain>
    </source>
</reference>
<sequence>MTELIDGKALAQKMQQELAAKVNNLKQKKGIVPGLAVILVGDDPASQVYVRNKERAALTVGFKSETVRLSEFICQEELIAVIERYNADNTIHGILVQLPLPNHINDKKIILAIDPKKDVDGFHPMNTGHLWSGRPLMVPCTPSGIMELLREYNVNLEGKHAVIIGRSNIVGKPMAQLLLDKNATVTLTHSRTRQLEEVCRCADVLIVAIGQGHFITKQYIKDGAIVIDVGMNRDDNGKLIGDVAFDEVAEVAAKITPVPGGVGPMTIAMLLEQTYQSALRSTHK</sequence>
<name>FOLD_STRP1</name>
<proteinExistence type="inferred from homology"/>
<evidence type="ECO:0000255" key="1">
    <source>
        <dbReference type="HAMAP-Rule" id="MF_01576"/>
    </source>
</evidence>
<dbReference type="EC" id="1.5.1.5" evidence="1"/>
<dbReference type="EC" id="3.5.4.9" evidence="1"/>
<dbReference type="EMBL" id="AE004092">
    <property type="protein sequence ID" value="AAK34300.1"/>
    <property type="molecule type" value="Genomic_DNA"/>
</dbReference>
<dbReference type="EMBL" id="CP000017">
    <property type="protein sequence ID" value="AAZ51852.1"/>
    <property type="molecule type" value="Genomic_DNA"/>
</dbReference>
<dbReference type="RefSeq" id="NP_269579.1">
    <property type="nucleotide sequence ID" value="NC_002737.2"/>
</dbReference>
<dbReference type="SMR" id="Q99YX2"/>
<dbReference type="PaxDb" id="1314-HKU360_01276"/>
<dbReference type="KEGG" id="spy:SPy_1502"/>
<dbReference type="KEGG" id="spz:M5005_Spy1234"/>
<dbReference type="PATRIC" id="fig|160490.10.peg.1311"/>
<dbReference type="HOGENOM" id="CLU_034045_2_1_9"/>
<dbReference type="OMA" id="VCHILTK"/>
<dbReference type="UniPathway" id="UPA00193"/>
<dbReference type="Proteomes" id="UP000000750">
    <property type="component" value="Chromosome"/>
</dbReference>
<dbReference type="GO" id="GO:0005829">
    <property type="term" value="C:cytosol"/>
    <property type="evidence" value="ECO:0007669"/>
    <property type="project" value="TreeGrafter"/>
</dbReference>
<dbReference type="GO" id="GO:0004477">
    <property type="term" value="F:methenyltetrahydrofolate cyclohydrolase activity"/>
    <property type="evidence" value="ECO:0007669"/>
    <property type="project" value="UniProtKB-UniRule"/>
</dbReference>
<dbReference type="GO" id="GO:0004488">
    <property type="term" value="F:methylenetetrahydrofolate dehydrogenase (NADP+) activity"/>
    <property type="evidence" value="ECO:0007669"/>
    <property type="project" value="UniProtKB-UniRule"/>
</dbReference>
<dbReference type="GO" id="GO:0000105">
    <property type="term" value="P:L-histidine biosynthetic process"/>
    <property type="evidence" value="ECO:0007669"/>
    <property type="project" value="UniProtKB-KW"/>
</dbReference>
<dbReference type="GO" id="GO:0009086">
    <property type="term" value="P:methionine biosynthetic process"/>
    <property type="evidence" value="ECO:0007669"/>
    <property type="project" value="UniProtKB-KW"/>
</dbReference>
<dbReference type="GO" id="GO:0006164">
    <property type="term" value="P:purine nucleotide biosynthetic process"/>
    <property type="evidence" value="ECO:0007669"/>
    <property type="project" value="UniProtKB-KW"/>
</dbReference>
<dbReference type="GO" id="GO:0035999">
    <property type="term" value="P:tetrahydrofolate interconversion"/>
    <property type="evidence" value="ECO:0007669"/>
    <property type="project" value="UniProtKB-UniRule"/>
</dbReference>
<dbReference type="CDD" id="cd01080">
    <property type="entry name" value="NAD_bind_m-THF_DH_Cyclohyd"/>
    <property type="match status" value="1"/>
</dbReference>
<dbReference type="FunFam" id="3.40.50.10860:FF:000001">
    <property type="entry name" value="Bifunctional protein FolD"/>
    <property type="match status" value="1"/>
</dbReference>
<dbReference type="FunFam" id="3.40.50.720:FF:000094">
    <property type="entry name" value="Bifunctional protein FolD"/>
    <property type="match status" value="1"/>
</dbReference>
<dbReference type="Gene3D" id="3.40.50.10860">
    <property type="entry name" value="Leucine Dehydrogenase, chain A, domain 1"/>
    <property type="match status" value="1"/>
</dbReference>
<dbReference type="Gene3D" id="3.40.50.720">
    <property type="entry name" value="NAD(P)-binding Rossmann-like Domain"/>
    <property type="match status" value="1"/>
</dbReference>
<dbReference type="HAMAP" id="MF_01576">
    <property type="entry name" value="THF_DHG_CYH"/>
    <property type="match status" value="1"/>
</dbReference>
<dbReference type="InterPro" id="IPR046346">
    <property type="entry name" value="Aminoacid_DH-like_N_sf"/>
</dbReference>
<dbReference type="InterPro" id="IPR036291">
    <property type="entry name" value="NAD(P)-bd_dom_sf"/>
</dbReference>
<dbReference type="InterPro" id="IPR000672">
    <property type="entry name" value="THF_DH/CycHdrlase"/>
</dbReference>
<dbReference type="InterPro" id="IPR020630">
    <property type="entry name" value="THF_DH/CycHdrlase_cat_dom"/>
</dbReference>
<dbReference type="InterPro" id="IPR020867">
    <property type="entry name" value="THF_DH/CycHdrlase_CS"/>
</dbReference>
<dbReference type="InterPro" id="IPR020631">
    <property type="entry name" value="THF_DH/CycHdrlase_NAD-bd_dom"/>
</dbReference>
<dbReference type="NCBIfam" id="NF008058">
    <property type="entry name" value="PRK10792.1"/>
    <property type="match status" value="1"/>
</dbReference>
<dbReference type="NCBIfam" id="NF010776">
    <property type="entry name" value="PRK14179.1"/>
    <property type="match status" value="1"/>
</dbReference>
<dbReference type="NCBIfam" id="NF010783">
    <property type="entry name" value="PRK14186.1"/>
    <property type="match status" value="1"/>
</dbReference>
<dbReference type="NCBIfam" id="NF010785">
    <property type="entry name" value="PRK14188.1"/>
    <property type="match status" value="1"/>
</dbReference>
<dbReference type="PANTHER" id="PTHR48099:SF5">
    <property type="entry name" value="C-1-TETRAHYDROFOLATE SYNTHASE, CYTOPLASMIC"/>
    <property type="match status" value="1"/>
</dbReference>
<dbReference type="PANTHER" id="PTHR48099">
    <property type="entry name" value="C-1-TETRAHYDROFOLATE SYNTHASE, CYTOPLASMIC-RELATED"/>
    <property type="match status" value="1"/>
</dbReference>
<dbReference type="Pfam" id="PF00763">
    <property type="entry name" value="THF_DHG_CYH"/>
    <property type="match status" value="1"/>
</dbReference>
<dbReference type="Pfam" id="PF02882">
    <property type="entry name" value="THF_DHG_CYH_C"/>
    <property type="match status" value="1"/>
</dbReference>
<dbReference type="PRINTS" id="PR00085">
    <property type="entry name" value="THFDHDRGNASE"/>
</dbReference>
<dbReference type="SUPFAM" id="SSF53223">
    <property type="entry name" value="Aminoacid dehydrogenase-like, N-terminal domain"/>
    <property type="match status" value="1"/>
</dbReference>
<dbReference type="SUPFAM" id="SSF51735">
    <property type="entry name" value="NAD(P)-binding Rossmann-fold domains"/>
    <property type="match status" value="1"/>
</dbReference>
<dbReference type="PROSITE" id="PS00766">
    <property type="entry name" value="THF_DHG_CYH_1"/>
    <property type="match status" value="1"/>
</dbReference>
<dbReference type="PROSITE" id="PS00767">
    <property type="entry name" value="THF_DHG_CYH_2"/>
    <property type="match status" value="1"/>
</dbReference>